<comment type="function">
    <text evidence="1 5">Binds and unwinds Holliday junction (HJ) and partial replication fork DNA (PubMed:15533834). Plays a critical role in recombination and DNA repair. Helps process Holliday junction intermediates to mature products by catalyzing branch migration. Has replication fork regression activity, unwinds stalled or blocked replication forks to make a HJ that can be resolved. Has a DNA unwinding activity characteristic of a DNA helicase with 3'-5' polarity (By similarity).</text>
</comment>
<comment type="catalytic activity">
    <reaction evidence="1">
        <text>Couples ATP hydrolysis with the unwinding of duplex DNA by translocating in the 3'-5' direction.</text>
        <dbReference type="EC" id="5.6.2.4"/>
    </reaction>
</comment>
<comment type="catalytic activity">
    <reaction evidence="1">
        <text>ATP + H2O = ADP + phosphate + H(+)</text>
        <dbReference type="Rhea" id="RHEA:13065"/>
        <dbReference type="ChEBI" id="CHEBI:15377"/>
        <dbReference type="ChEBI" id="CHEBI:15378"/>
        <dbReference type="ChEBI" id="CHEBI:30616"/>
        <dbReference type="ChEBI" id="CHEBI:43474"/>
        <dbReference type="ChEBI" id="CHEBI:456216"/>
        <dbReference type="EC" id="5.6.2.4"/>
    </reaction>
</comment>
<comment type="biophysicochemical properties">
    <temperatureDependence>
        <text>Optimum temperature is 60 degrees Celsius for unwinding of Holliday junction DNA, higher temperatures could not be tested, nor could unwinding of partial replication forks (PubMed:15533834).</text>
    </temperatureDependence>
</comment>
<comment type="subunit">
    <text evidence="2">Monomer (By similarity).</text>
</comment>
<comment type="domain">
    <text evidence="2 5">The N-terminal extension (residues 1-86) is not required for DNA-binding or HJ unwinding in vitro (PubMed:15533834). The wedge domain within the N-terminus inserts into the replication fork junction, where the lagging and leading strand split (By similarity).</text>
</comment>
<comment type="similarity">
    <text evidence="7">Belongs to the helicase family. RecG subfamily.</text>
</comment>
<protein>
    <recommendedName>
        <fullName>ATP-dependent DNA helicase RecG</fullName>
        <ecNumber evidence="1">5.6.2.4</ecNumber>
    </recommendedName>
    <alternativeName>
        <fullName evidence="6">DNA branch migration protein RecG</fullName>
    </alternativeName>
    <alternativeName>
        <fullName evidence="7">Probable DNA 3'-5' helicase RecG</fullName>
    </alternativeName>
</protein>
<evidence type="ECO:0000250" key="1">
    <source>
        <dbReference type="UniProtKB" id="P24230"/>
    </source>
</evidence>
<evidence type="ECO:0000250" key="2">
    <source>
        <dbReference type="UniProtKB" id="Q9WY48"/>
    </source>
</evidence>
<evidence type="ECO:0000255" key="3">
    <source>
        <dbReference type="PROSITE-ProRule" id="PRU00541"/>
    </source>
</evidence>
<evidence type="ECO:0000255" key="4">
    <source>
        <dbReference type="PROSITE-ProRule" id="PRU00542"/>
    </source>
</evidence>
<evidence type="ECO:0000269" key="5">
    <source>
    </source>
</evidence>
<evidence type="ECO:0000303" key="6">
    <source>
    </source>
</evidence>
<evidence type="ECO:0000305" key="7"/>
<accession>O67837</accession>
<proteinExistence type="evidence at protein level"/>
<gene>
    <name type="primary">recG</name>
    <name type="ordered locus">aq_2053</name>
</gene>
<dbReference type="EC" id="5.6.2.4" evidence="1"/>
<dbReference type="EMBL" id="AE000657">
    <property type="protein sequence ID" value="AAC07804.1"/>
    <property type="molecule type" value="Genomic_DNA"/>
</dbReference>
<dbReference type="PIR" id="A70476">
    <property type="entry name" value="A70476"/>
</dbReference>
<dbReference type="RefSeq" id="NP_214406.1">
    <property type="nucleotide sequence ID" value="NC_000918.1"/>
</dbReference>
<dbReference type="RefSeq" id="WP_010881342.1">
    <property type="nucleotide sequence ID" value="NC_000918.1"/>
</dbReference>
<dbReference type="SMR" id="O67837"/>
<dbReference type="FunCoup" id="O67837">
    <property type="interactions" value="398"/>
</dbReference>
<dbReference type="STRING" id="224324.aq_2053"/>
<dbReference type="EnsemblBacteria" id="AAC07804">
    <property type="protein sequence ID" value="AAC07804"/>
    <property type="gene ID" value="aq_2053"/>
</dbReference>
<dbReference type="KEGG" id="aae:aq_2053"/>
<dbReference type="PATRIC" id="fig|224324.8.peg.1583"/>
<dbReference type="eggNOG" id="COG1200">
    <property type="taxonomic scope" value="Bacteria"/>
</dbReference>
<dbReference type="HOGENOM" id="CLU_005122_7_1_0"/>
<dbReference type="InParanoid" id="O67837"/>
<dbReference type="OrthoDB" id="9804325at2"/>
<dbReference type="Proteomes" id="UP000000798">
    <property type="component" value="Chromosome"/>
</dbReference>
<dbReference type="GO" id="GO:0005524">
    <property type="term" value="F:ATP binding"/>
    <property type="evidence" value="ECO:0007669"/>
    <property type="project" value="UniProtKB-KW"/>
</dbReference>
<dbReference type="GO" id="GO:0016887">
    <property type="term" value="F:ATP hydrolysis activity"/>
    <property type="evidence" value="ECO:0007669"/>
    <property type="project" value="RHEA"/>
</dbReference>
<dbReference type="GO" id="GO:0003677">
    <property type="term" value="F:DNA binding"/>
    <property type="evidence" value="ECO:0007669"/>
    <property type="project" value="UniProtKB-KW"/>
</dbReference>
<dbReference type="GO" id="GO:0003678">
    <property type="term" value="F:DNA helicase activity"/>
    <property type="evidence" value="ECO:0000318"/>
    <property type="project" value="GO_Central"/>
</dbReference>
<dbReference type="GO" id="GO:0006310">
    <property type="term" value="P:DNA recombination"/>
    <property type="evidence" value="ECO:0007669"/>
    <property type="project" value="UniProtKB-KW"/>
</dbReference>
<dbReference type="GO" id="GO:0006281">
    <property type="term" value="P:DNA repair"/>
    <property type="evidence" value="ECO:0000318"/>
    <property type="project" value="GO_Central"/>
</dbReference>
<dbReference type="CDD" id="cd17992">
    <property type="entry name" value="DEXHc_RecG"/>
    <property type="match status" value="1"/>
</dbReference>
<dbReference type="CDD" id="cd04488">
    <property type="entry name" value="RecG_wedge_OBF"/>
    <property type="match status" value="1"/>
</dbReference>
<dbReference type="CDD" id="cd18811">
    <property type="entry name" value="SF2_C_RecG"/>
    <property type="match status" value="1"/>
</dbReference>
<dbReference type="Gene3D" id="2.40.50.140">
    <property type="entry name" value="Nucleic acid-binding proteins"/>
    <property type="match status" value="1"/>
</dbReference>
<dbReference type="Gene3D" id="3.40.50.300">
    <property type="entry name" value="P-loop containing nucleotide triphosphate hydrolases"/>
    <property type="match status" value="2"/>
</dbReference>
<dbReference type="InterPro" id="IPR004609">
    <property type="entry name" value="ATP-dep_DNA_helicase_RecG"/>
</dbReference>
<dbReference type="InterPro" id="IPR011545">
    <property type="entry name" value="DEAD/DEAH_box_helicase_dom"/>
</dbReference>
<dbReference type="InterPro" id="IPR014001">
    <property type="entry name" value="Helicase_ATP-bd"/>
</dbReference>
<dbReference type="InterPro" id="IPR001650">
    <property type="entry name" value="Helicase_C-like"/>
</dbReference>
<dbReference type="InterPro" id="IPR012340">
    <property type="entry name" value="NA-bd_OB-fold"/>
</dbReference>
<dbReference type="InterPro" id="IPR027417">
    <property type="entry name" value="P-loop_NTPase"/>
</dbReference>
<dbReference type="InterPro" id="IPR047112">
    <property type="entry name" value="RecG/Mfd"/>
</dbReference>
<dbReference type="InterPro" id="IPR045562">
    <property type="entry name" value="RecG_dom3_C"/>
</dbReference>
<dbReference type="InterPro" id="IPR033454">
    <property type="entry name" value="RecG_wedge"/>
</dbReference>
<dbReference type="NCBIfam" id="NF008165">
    <property type="entry name" value="PRK10917.1-3"/>
    <property type="match status" value="1"/>
</dbReference>
<dbReference type="NCBIfam" id="NF008168">
    <property type="entry name" value="PRK10917.2-2"/>
    <property type="match status" value="1"/>
</dbReference>
<dbReference type="NCBIfam" id="TIGR00643">
    <property type="entry name" value="recG"/>
    <property type="match status" value="1"/>
</dbReference>
<dbReference type="PANTHER" id="PTHR47964">
    <property type="entry name" value="ATP-DEPENDENT DNA HELICASE HOMOLOG RECG, CHLOROPLASTIC"/>
    <property type="match status" value="1"/>
</dbReference>
<dbReference type="PANTHER" id="PTHR47964:SF1">
    <property type="entry name" value="ATP-DEPENDENT DNA HELICASE HOMOLOG RECG, CHLOROPLASTIC"/>
    <property type="match status" value="1"/>
</dbReference>
<dbReference type="Pfam" id="PF00270">
    <property type="entry name" value="DEAD"/>
    <property type="match status" value="1"/>
</dbReference>
<dbReference type="Pfam" id="PF00271">
    <property type="entry name" value="Helicase_C"/>
    <property type="match status" value="1"/>
</dbReference>
<dbReference type="Pfam" id="PF19833">
    <property type="entry name" value="RecG_dom3_C"/>
    <property type="match status" value="1"/>
</dbReference>
<dbReference type="Pfam" id="PF17191">
    <property type="entry name" value="RecG_wedge"/>
    <property type="match status" value="1"/>
</dbReference>
<dbReference type="SMART" id="SM00487">
    <property type="entry name" value="DEXDc"/>
    <property type="match status" value="1"/>
</dbReference>
<dbReference type="SMART" id="SM00490">
    <property type="entry name" value="HELICc"/>
    <property type="match status" value="1"/>
</dbReference>
<dbReference type="SUPFAM" id="SSF50249">
    <property type="entry name" value="Nucleic acid-binding proteins"/>
    <property type="match status" value="1"/>
</dbReference>
<dbReference type="SUPFAM" id="SSF52540">
    <property type="entry name" value="P-loop containing nucleoside triphosphate hydrolases"/>
    <property type="match status" value="2"/>
</dbReference>
<dbReference type="PROSITE" id="PS51192">
    <property type="entry name" value="HELICASE_ATP_BIND_1"/>
    <property type="match status" value="1"/>
</dbReference>
<dbReference type="PROSITE" id="PS51194">
    <property type="entry name" value="HELICASE_CTER"/>
    <property type="match status" value="1"/>
</dbReference>
<sequence length="792" mass="91180">MDTAFVKDFIDNLLENDGLKLKRAIGVGIFLFNKLKEDAPDYILESLKEVDKLPFEKKKAVLREVRKFLSEYEKRKKEGNFLEKTKRKPIDVFFNPIEKVKILTKTQISTLKALGIETVYDALFYFPEKYEDKRLNTSIKTAKVGEKVALKVKVKEVKIKENERYTLEVVCTDGTGYITLKYRYKNPHFALKAFRKGMEIVVYGKLKSFKGEKYMVHPEVKSPSSEELGKIIPVYYVRKRGELQEISSKTKQKRVRTALTALSESLYRYFPEYMPDYLIEKYNFPDIALCIKELHNPKDISVNALNSFTDLYHKRVIYDELFLFQLALLLKKQEIKKEKAPKVNVDEKFLRKAIEKLPFKLTRAQERAIKEILEDLSRDVPMNRLLQGDVGSGKTIVAILTSLAVVKSGYQVAVMVPTEILAHQHYKKFSEMLKDYGVNVALLTGSLTPSQKKSVYKHVKEGNIHVLVGTHALIQDKVEFKNLGYVIIDEQHRFGVMQRKLLLEKGKGLYPHCLVMSATPIPRTLALSIYGDLDISIIDELPPGRKEVITKLYFESQKEEVYKKVEEELKKGNKVYVIYPLIEESEKLNLKAATEEYERWKKLFPDRKVLLLHGKMPDKEKLAVMEEFKREGDILVSTTVIEVGIDVPEATVMVIEDAHRFGLSQLHQLRGRVGRSDKEAYCLLVVPDEIKNEKNESLKRLRVFVKTTDGFKIAEEDLKLRGPGEIIGVSQSGYFGFRVANLARSQDRALLGVARKDAEELLKNNPNLENLQDLKKLLIKKYGDKMELSFVA</sequence>
<name>RECG_AQUAE</name>
<feature type="chain" id="PRO_0000102137" description="ATP-dependent DNA helicase RecG">
    <location>
        <begin position="1"/>
        <end position="792"/>
    </location>
</feature>
<feature type="domain" description="Helicase ATP-binding" evidence="3">
    <location>
        <begin position="375"/>
        <end position="538"/>
    </location>
</feature>
<feature type="domain" description="Helicase C-terminal" evidence="4">
    <location>
        <begin position="557"/>
        <end position="719"/>
    </location>
</feature>
<feature type="region of interest" description="Wedge domain" evidence="2">
    <location>
        <begin position="134"/>
        <end position="229"/>
    </location>
</feature>
<feature type="short sequence motif" description="DEAH box" evidence="3">
    <location>
        <begin position="489"/>
        <end position="492"/>
    </location>
</feature>
<feature type="binding site" evidence="3">
    <location>
        <begin position="388"/>
        <end position="395"/>
    </location>
    <ligand>
        <name>ATP</name>
        <dbReference type="ChEBI" id="CHEBI:30616"/>
    </ligand>
</feature>
<keyword id="KW-0067">ATP-binding</keyword>
<keyword id="KW-0227">DNA damage</keyword>
<keyword id="KW-0233">DNA recombination</keyword>
<keyword id="KW-0234">DNA repair</keyword>
<keyword id="KW-0238">DNA-binding</keyword>
<keyword id="KW-0347">Helicase</keyword>
<keyword id="KW-0378">Hydrolase</keyword>
<keyword id="KW-0413">Isomerase</keyword>
<keyword id="KW-0547">Nucleotide-binding</keyword>
<keyword id="KW-1185">Reference proteome</keyword>
<reference key="1">
    <citation type="journal article" date="1998" name="Nature">
        <title>The complete genome of the hyperthermophilic bacterium Aquifex aeolicus.</title>
        <authorList>
            <person name="Deckert G."/>
            <person name="Warren P.V."/>
            <person name="Gaasterland T."/>
            <person name="Young W.G."/>
            <person name="Lenox A.L."/>
            <person name="Graham D.E."/>
            <person name="Overbeek R."/>
            <person name="Snead M.A."/>
            <person name="Keller M."/>
            <person name="Aujay M."/>
            <person name="Huber R."/>
            <person name="Feldman R.A."/>
            <person name="Short J.M."/>
            <person name="Olsen G.J."/>
            <person name="Swanson R.V."/>
        </authorList>
    </citation>
    <scope>NUCLEOTIDE SEQUENCE [LARGE SCALE GENOMIC DNA]</scope>
    <source>
        <strain>VF5</strain>
    </source>
</reference>
<reference key="2">
    <citation type="journal article" date="2005" name="DNA Repair">
        <title>Conservation of RecG activity from pathogens to hyperthermophiles.</title>
        <authorList>
            <person name="Wen Q."/>
            <person name="Mahdi A.A."/>
            <person name="Briggs G.S."/>
            <person name="Sharples G.J."/>
            <person name="Lloyd R.G."/>
        </authorList>
    </citation>
    <scope>FUNCTION</scope>
    <scope>BIOPHYSICOCHEMICAL PROPERTIES</scope>
    <scope>DOMAIN</scope>
    <scope>DNA-BINDING</scope>
</reference>
<organism>
    <name type="scientific">Aquifex aeolicus (strain VF5)</name>
    <dbReference type="NCBI Taxonomy" id="224324"/>
    <lineage>
        <taxon>Bacteria</taxon>
        <taxon>Pseudomonadati</taxon>
        <taxon>Aquificota</taxon>
        <taxon>Aquificia</taxon>
        <taxon>Aquificales</taxon>
        <taxon>Aquificaceae</taxon>
        <taxon>Aquifex</taxon>
    </lineage>
</organism>